<sequence>MKRPDYRTLQALDAVIRERGFERAAQKLCITQSAVSQRIKQLENMFGQPLLVRTVPPRPTEQGQKLLALLRQVELLEEEWLGDEQTGSTPLLLSLAVNADSLATWLLPALAPVLADSPIRLNLQVEDETRTQERLRRGEVVGAVSIQHQALPSCLVDKLGALDYLFVSSKPFAEKYFPNGVTRSALLKAPVVAFDHLDDMHQAFLQQNFDLPPGSVPCHIVNSSEAFVQLARQGTTCCMIPHLQIEKELASGELIDLTPGLFQRRMLYWHRFAPESRMMRKVTDALLDYGHKVLRQD</sequence>
<keyword id="KW-0238">DNA-binding</keyword>
<keyword id="KW-1185">Reference proteome</keyword>
<keyword id="KW-0804">Transcription</keyword>
<keyword id="KW-0805">Transcription regulation</keyword>
<proteinExistence type="inferred from homology"/>
<reference key="1">
    <citation type="journal article" date="2009" name="PLoS Genet.">
        <title>Organised genome dynamics in the Escherichia coli species results in highly diverse adaptive paths.</title>
        <authorList>
            <person name="Touchon M."/>
            <person name="Hoede C."/>
            <person name="Tenaillon O."/>
            <person name="Barbe V."/>
            <person name="Baeriswyl S."/>
            <person name="Bidet P."/>
            <person name="Bingen E."/>
            <person name="Bonacorsi S."/>
            <person name="Bouchier C."/>
            <person name="Bouvet O."/>
            <person name="Calteau A."/>
            <person name="Chiapello H."/>
            <person name="Clermont O."/>
            <person name="Cruveiller S."/>
            <person name="Danchin A."/>
            <person name="Diard M."/>
            <person name="Dossat C."/>
            <person name="Karoui M.E."/>
            <person name="Frapy E."/>
            <person name="Garry L."/>
            <person name="Ghigo J.M."/>
            <person name="Gilles A.M."/>
            <person name="Johnson J."/>
            <person name="Le Bouguenec C."/>
            <person name="Lescat M."/>
            <person name="Mangenot S."/>
            <person name="Martinez-Jehanne V."/>
            <person name="Matic I."/>
            <person name="Nassif X."/>
            <person name="Oztas S."/>
            <person name="Petit M.A."/>
            <person name="Pichon C."/>
            <person name="Rouy Z."/>
            <person name="Ruf C.S."/>
            <person name="Schneider D."/>
            <person name="Tourret J."/>
            <person name="Vacherie B."/>
            <person name="Vallenet D."/>
            <person name="Medigue C."/>
            <person name="Rocha E.P.C."/>
            <person name="Denamur E."/>
        </authorList>
    </citation>
    <scope>NUCLEOTIDE SEQUENCE [LARGE SCALE GENOMIC DNA]</scope>
    <source>
        <strain>55989 / EAEC</strain>
    </source>
</reference>
<feature type="chain" id="PRO_1000146107" description="HTH-type transcriptional regulator ArgP">
    <location>
        <begin position="1"/>
        <end position="297"/>
    </location>
</feature>
<feature type="domain" description="HTH lysR-type" evidence="1">
    <location>
        <begin position="4"/>
        <end position="60"/>
    </location>
</feature>
<feature type="DNA-binding region" description="H-T-H motif" evidence="1">
    <location>
        <begin position="21"/>
        <end position="40"/>
    </location>
</feature>
<comment type="function">
    <text evidence="1">Controls the transcription of genes involved in arginine and lysine metabolism.</text>
</comment>
<comment type="subunit">
    <text evidence="1">Homodimer.</text>
</comment>
<comment type="similarity">
    <text evidence="2">Belongs to the LysR transcriptional regulatory family.</text>
</comment>
<protein>
    <recommendedName>
        <fullName evidence="1">HTH-type transcriptional regulator ArgP</fullName>
    </recommendedName>
</protein>
<dbReference type="EMBL" id="CU928145">
    <property type="protein sequence ID" value="CAU99174.1"/>
    <property type="molecule type" value="Genomic_DNA"/>
</dbReference>
<dbReference type="RefSeq" id="WP_000828351.1">
    <property type="nucleotide sequence ID" value="NZ_CP028304.1"/>
</dbReference>
<dbReference type="SMR" id="B7LFH3"/>
<dbReference type="GeneID" id="93779084"/>
<dbReference type="KEGG" id="eck:EC55989_3203"/>
<dbReference type="HOGENOM" id="CLU_063829_0_0_6"/>
<dbReference type="Proteomes" id="UP000000746">
    <property type="component" value="Chromosome"/>
</dbReference>
<dbReference type="GO" id="GO:0003677">
    <property type="term" value="F:DNA binding"/>
    <property type="evidence" value="ECO:0007669"/>
    <property type="project" value="UniProtKB-UniRule"/>
</dbReference>
<dbReference type="GO" id="GO:0003700">
    <property type="term" value="F:DNA-binding transcription factor activity"/>
    <property type="evidence" value="ECO:0007669"/>
    <property type="project" value="UniProtKB-UniRule"/>
</dbReference>
<dbReference type="CDD" id="cd08428">
    <property type="entry name" value="PBP2_IciA_ArgP"/>
    <property type="match status" value="1"/>
</dbReference>
<dbReference type="FunFam" id="1.10.10.10:FF:000061">
    <property type="entry name" value="HTH-type transcriptional regulator ArgP"/>
    <property type="match status" value="1"/>
</dbReference>
<dbReference type="FunFam" id="3.40.190.290:FF:000002">
    <property type="entry name" value="HTH-type transcriptional regulator ArgP"/>
    <property type="match status" value="1"/>
</dbReference>
<dbReference type="Gene3D" id="3.40.190.290">
    <property type="match status" value="1"/>
</dbReference>
<dbReference type="Gene3D" id="1.10.10.10">
    <property type="entry name" value="Winged helix-like DNA-binding domain superfamily/Winged helix DNA-binding domain"/>
    <property type="match status" value="1"/>
</dbReference>
<dbReference type="HAMAP" id="MF_00513">
    <property type="entry name" value="HTH_type_ArgP"/>
    <property type="match status" value="1"/>
</dbReference>
<dbReference type="InterPro" id="IPR017685">
    <property type="entry name" value="ArgP"/>
</dbReference>
<dbReference type="InterPro" id="IPR023490">
    <property type="entry name" value="ArgP_gammaproteobact"/>
</dbReference>
<dbReference type="InterPro" id="IPR050176">
    <property type="entry name" value="LTTR"/>
</dbReference>
<dbReference type="InterPro" id="IPR005119">
    <property type="entry name" value="LysR_subst-bd"/>
</dbReference>
<dbReference type="InterPro" id="IPR000847">
    <property type="entry name" value="Tscrpt_reg_HTH_LysR"/>
</dbReference>
<dbReference type="InterPro" id="IPR036388">
    <property type="entry name" value="WH-like_DNA-bd_sf"/>
</dbReference>
<dbReference type="InterPro" id="IPR036390">
    <property type="entry name" value="WH_DNA-bd_sf"/>
</dbReference>
<dbReference type="NCBIfam" id="TIGR03298">
    <property type="entry name" value="argP"/>
    <property type="match status" value="1"/>
</dbReference>
<dbReference type="NCBIfam" id="NF002964">
    <property type="entry name" value="PRK03635.1"/>
    <property type="match status" value="1"/>
</dbReference>
<dbReference type="NCBIfam" id="NF009888">
    <property type="entry name" value="PRK13348.1"/>
    <property type="match status" value="1"/>
</dbReference>
<dbReference type="PANTHER" id="PTHR30579:SF2">
    <property type="entry name" value="HTH-TYPE TRANSCRIPTIONAL REGULATOR ARGP"/>
    <property type="match status" value="1"/>
</dbReference>
<dbReference type="PANTHER" id="PTHR30579">
    <property type="entry name" value="TRANSCRIPTIONAL REGULATOR"/>
    <property type="match status" value="1"/>
</dbReference>
<dbReference type="Pfam" id="PF00126">
    <property type="entry name" value="HTH_1"/>
    <property type="match status" value="1"/>
</dbReference>
<dbReference type="Pfam" id="PF03466">
    <property type="entry name" value="LysR_substrate"/>
    <property type="match status" value="1"/>
</dbReference>
<dbReference type="PRINTS" id="PR00039">
    <property type="entry name" value="HTHLYSR"/>
</dbReference>
<dbReference type="SUPFAM" id="SSF53850">
    <property type="entry name" value="Periplasmic binding protein-like II"/>
    <property type="match status" value="1"/>
</dbReference>
<dbReference type="SUPFAM" id="SSF46785">
    <property type="entry name" value="Winged helix' DNA-binding domain"/>
    <property type="match status" value="1"/>
</dbReference>
<dbReference type="PROSITE" id="PS50931">
    <property type="entry name" value="HTH_LYSR"/>
    <property type="match status" value="1"/>
</dbReference>
<gene>
    <name evidence="1" type="primary">argP</name>
    <name type="synonym">iciA</name>
    <name type="ordered locus">EC55989_3203</name>
</gene>
<accession>B7LFH3</accession>
<name>ARGP_ECO55</name>
<organism>
    <name type="scientific">Escherichia coli (strain 55989 / EAEC)</name>
    <dbReference type="NCBI Taxonomy" id="585055"/>
    <lineage>
        <taxon>Bacteria</taxon>
        <taxon>Pseudomonadati</taxon>
        <taxon>Pseudomonadota</taxon>
        <taxon>Gammaproteobacteria</taxon>
        <taxon>Enterobacterales</taxon>
        <taxon>Enterobacteriaceae</taxon>
        <taxon>Escherichia</taxon>
    </lineage>
</organism>
<evidence type="ECO:0000255" key="1">
    <source>
        <dbReference type="HAMAP-Rule" id="MF_00513"/>
    </source>
</evidence>
<evidence type="ECO:0000305" key="2"/>